<feature type="chain" id="PRO_0000164894" description="Major spike protein G">
    <location>
        <begin position="1"/>
        <end position="187"/>
    </location>
</feature>
<feature type="sequence variant" description="In phi KhT mutant.">
    <original>A</original>
    <variation>S</variation>
    <location>
        <position position="75"/>
    </location>
</feature>
<reference key="1">
    <citation type="journal article" date="1996" name="J. Biochem.">
        <title>The virion proteins encoded by bacteriophage phi K and its host-range mutant phi KhT: host-range determination and DNA binding properties.</title>
        <authorList>
            <person name="Kodaira K."/>
            <person name="Oki M."/>
            <person name="Kakikawa M."/>
            <person name="Kimoto H."/>
            <person name="Taketo A."/>
        </authorList>
    </citation>
    <scope>NUCLEOTIDE SEQUENCE [GENOMIC DNA] (PHI-K AND MUTANT PHI KHT)</scope>
</reference>
<reference key="2">
    <citation type="journal article" date="1979" name="J. Biol. Chem.">
        <title>dnaG (primase)-dependent origins of DNA replication. Nucleotide sequences of the negative strand initiation sites of bacteriophages St-1, phi K, and alpha 3.</title>
        <authorList>
            <person name="Sims J."/>
            <person name="Capon D."/>
            <person name="Dressler D."/>
        </authorList>
    </citation>
    <scope>NUCLEOTIDE SEQUENCE [GENOMIC RNA] OF 165-187</scope>
</reference>
<keyword id="KW-0167">Capsid protein</keyword>
<keyword id="KW-0945">Host-virus interaction</keyword>
<keyword id="KW-1161">Viral attachment to host cell</keyword>
<keyword id="KW-1171">Viral genome ejection through host cell envelope</keyword>
<keyword id="KW-1162">Viral penetration into host cytoplasm</keyword>
<keyword id="KW-0946">Virion</keyword>
<keyword id="KW-1160">Virus entry into host cell</keyword>
<accession>Q38042</accession>
<accession>Q8W5S4</accession>
<organismHost>
    <name type="scientific">Escherichia coli</name>
    <dbReference type="NCBI Taxonomy" id="562"/>
</organismHost>
<proteinExistence type="inferred from homology"/>
<protein>
    <recommendedName>
        <fullName>Major spike protein G</fullName>
    </recommendedName>
    <alternativeName>
        <fullName>G protein</fullName>
    </alternativeName>
    <alternativeName>
        <fullName>GPG</fullName>
    </alternativeName>
</protein>
<sequence length="187" mass="19569">MYQIFVTKHDTAIQTSRFSVTGSITPVAPTGNIPVINTGNITAEHAVVSLYANLTAGTSSDGSFIVAMKVDTSPADPNCVISAGVNLSFAGTSYPIVGIVRFESASDQPTSIAGSQIEHYPIEMSVGSGGVCSARDCVTVDIHPRAFGNNVFVGVICSSAKWTSGRVLGTIATTQVIREYQVLQPLK</sequence>
<gene>
    <name type="primary">G</name>
</gene>
<comment type="function">
    <text evidence="1">Attaches the circulating virion to the bacterial lipopolysaccharides which serve as receptor for the virus. Determines the phage host-range. Probably triggers with protein H the injection of the phage DNA into the host cytoplasm upon conformational changes induced by the interaction with host lipopolysaccharides (By similarity).</text>
</comment>
<comment type="subunit">
    <text>The virion is composed of 60 copies each of the F, G, and J proteins, and 12 copies of the H protein. There are 12 spikes which are each composed of 5 G and one H proteins.</text>
</comment>
<comment type="subcellular location">
    <subcellularLocation>
        <location evidence="2">Virion</location>
    </subcellularLocation>
</comment>
<comment type="miscellaneous">
    <text>Phi KhT, a host-range mutant of phi K, can grow on E.coli C and B, besides K12, and is more thermosensitive than the parental phage phi K.</text>
</comment>
<comment type="similarity">
    <text evidence="2">Belongs to the microvirus G protein family.</text>
</comment>
<evidence type="ECO:0000250" key="1"/>
<evidence type="ECO:0000305" key="2"/>
<dbReference type="EMBL" id="X60323">
    <property type="protein sequence ID" value="CAA42892.1"/>
    <property type="molecule type" value="Genomic_DNA"/>
</dbReference>
<dbReference type="EMBL" id="M10726">
    <property type="protein sequence ID" value="AAA32364.2"/>
    <property type="molecule type" value="Genomic_RNA"/>
</dbReference>
<dbReference type="PIR" id="JC4806">
    <property type="entry name" value="JC4806"/>
</dbReference>
<dbReference type="RefSeq" id="NP_043950.1">
    <property type="nucleotide sequence ID" value="NC_001730.1"/>
</dbReference>
<dbReference type="SMR" id="Q38042"/>
<dbReference type="GeneID" id="1261200"/>
<dbReference type="KEGG" id="vg:1261200"/>
<dbReference type="Proteomes" id="UP000002122">
    <property type="component" value="Segment"/>
</dbReference>
<dbReference type="GO" id="GO:0019028">
    <property type="term" value="C:viral capsid"/>
    <property type="evidence" value="ECO:0007669"/>
    <property type="project" value="UniProtKB-KW"/>
</dbReference>
<dbReference type="GO" id="GO:0046718">
    <property type="term" value="P:symbiont entry into host cell"/>
    <property type="evidence" value="ECO:0007669"/>
    <property type="project" value="UniProtKB-KW"/>
</dbReference>
<dbReference type="GO" id="GO:0044003">
    <property type="term" value="P:symbiont-mediated perturbation of host process"/>
    <property type="evidence" value="ECO:0007669"/>
    <property type="project" value="InterPro"/>
</dbReference>
<dbReference type="GO" id="GO:0019062">
    <property type="term" value="P:virion attachment to host cell"/>
    <property type="evidence" value="ECO:0007669"/>
    <property type="project" value="UniProtKB-KW"/>
</dbReference>
<dbReference type="Gene3D" id="2.60.120.20">
    <property type="match status" value="1"/>
</dbReference>
<dbReference type="InterPro" id="IPR016184">
    <property type="entry name" value="Capsid/spike_ssDNA_virus"/>
</dbReference>
<dbReference type="InterPro" id="IPR003515">
    <property type="entry name" value="Spike_G"/>
</dbReference>
<dbReference type="InterPro" id="IPR029053">
    <property type="entry name" value="Viral_coat"/>
</dbReference>
<dbReference type="Pfam" id="PF02306">
    <property type="entry name" value="Phage_G"/>
    <property type="match status" value="1"/>
</dbReference>
<dbReference type="PIRSF" id="PIRSF004159">
    <property type="entry name" value="Spike_G"/>
    <property type="match status" value="1"/>
</dbReference>
<dbReference type="SUPFAM" id="SSF88645">
    <property type="entry name" value="ssDNA viruses"/>
    <property type="match status" value="1"/>
</dbReference>
<organism>
    <name type="scientific">Enterobacteria phage phiK</name>
    <name type="common">Bacteriophage phi-K</name>
    <dbReference type="NCBI Taxonomy" id="10848"/>
    <lineage>
        <taxon>Viruses</taxon>
        <taxon>Monodnaviria</taxon>
        <taxon>Sangervirae</taxon>
        <taxon>Phixviricota</taxon>
        <taxon>Malgrandaviricetes</taxon>
        <taxon>Petitvirales</taxon>
        <taxon>Microviridae</taxon>
        <taxon>Bullavirinae</taxon>
        <taxon>Alphatrevirus</taxon>
    </lineage>
</organism>
<name>G_BPPHK</name>